<gene>
    <name type="ORF">DDB_G0271996</name>
</gene>
<protein>
    <recommendedName>
        <fullName>FNIP repeat-containing protein DDB_G0271996</fullName>
    </recommendedName>
</protein>
<name>Y1996_DICDI</name>
<proteinExistence type="predicted"/>
<keyword id="KW-0175">Coiled coil</keyword>
<keyword id="KW-1185">Reference proteome</keyword>
<keyword id="KW-0677">Repeat</keyword>
<dbReference type="EMBL" id="AAFI02000007">
    <property type="protein sequence ID" value="EAL71432.1"/>
    <property type="molecule type" value="Genomic_DNA"/>
</dbReference>
<dbReference type="RefSeq" id="XP_645366.1">
    <property type="nucleotide sequence ID" value="XM_640274.1"/>
</dbReference>
<dbReference type="SMR" id="Q86AH2"/>
<dbReference type="PaxDb" id="44689-DDB0238607"/>
<dbReference type="EnsemblProtists" id="EAL71432">
    <property type="protein sequence ID" value="EAL71432"/>
    <property type="gene ID" value="DDB_G0271996"/>
</dbReference>
<dbReference type="GeneID" id="8618255"/>
<dbReference type="KEGG" id="ddi:DDB_G0271996"/>
<dbReference type="dictyBase" id="DDB_G0271996"/>
<dbReference type="VEuPathDB" id="AmoebaDB:DDB_G0271996"/>
<dbReference type="HOGENOM" id="CLU_312959_0_0_1"/>
<dbReference type="InParanoid" id="Q86AH2"/>
<dbReference type="PhylomeDB" id="Q86AH2"/>
<dbReference type="PRO" id="PR:Q86AH2"/>
<dbReference type="Proteomes" id="UP000002195">
    <property type="component" value="Chromosome 2"/>
</dbReference>
<dbReference type="InterPro" id="IPR008615">
    <property type="entry name" value="FNIP"/>
</dbReference>
<dbReference type="InterPro" id="IPR051251">
    <property type="entry name" value="STK_FNIP-Repeat"/>
</dbReference>
<dbReference type="PANTHER" id="PTHR32134">
    <property type="entry name" value="FNIP REPEAT-CONTAINING PROTEIN"/>
    <property type="match status" value="1"/>
</dbReference>
<dbReference type="PANTHER" id="PTHR32134:SF92">
    <property type="entry name" value="FNIP REPEAT-CONTAINING PROTEIN"/>
    <property type="match status" value="1"/>
</dbReference>
<dbReference type="Pfam" id="PF05725">
    <property type="entry name" value="FNIP"/>
    <property type="match status" value="3"/>
</dbReference>
<accession>Q86AH2</accession>
<accession>Q55AA0</accession>
<feature type="chain" id="PRO_0000363975" description="FNIP repeat-containing protein DDB_G0271996">
    <location>
        <begin position="1"/>
        <end position="937"/>
    </location>
</feature>
<feature type="repeat" description="FNIP 1">
    <location>
        <begin position="307"/>
        <end position="350"/>
    </location>
</feature>
<feature type="repeat" description="FNIP 2">
    <location>
        <begin position="354"/>
        <end position="394"/>
    </location>
</feature>
<feature type="repeat" description="FNIP 3">
    <location>
        <begin position="396"/>
        <end position="439"/>
    </location>
</feature>
<feature type="repeat" description="FNIP 4">
    <location>
        <begin position="598"/>
        <end position="640"/>
    </location>
</feature>
<feature type="region of interest" description="Disordered" evidence="2">
    <location>
        <begin position="1"/>
        <end position="60"/>
    </location>
</feature>
<feature type="region of interest" description="Disordered" evidence="2">
    <location>
        <begin position="719"/>
        <end position="767"/>
    </location>
</feature>
<feature type="region of interest" description="Disordered" evidence="2">
    <location>
        <begin position="794"/>
        <end position="823"/>
    </location>
</feature>
<feature type="region of interest" description="Disordered" evidence="2">
    <location>
        <begin position="910"/>
        <end position="937"/>
    </location>
</feature>
<feature type="coiled-coil region" evidence="1">
    <location>
        <begin position="677"/>
        <end position="769"/>
    </location>
</feature>
<feature type="coiled-coil region" evidence="1">
    <location>
        <begin position="902"/>
        <end position="937"/>
    </location>
</feature>
<feature type="compositionally biased region" description="Polar residues" evidence="2">
    <location>
        <begin position="1"/>
        <end position="12"/>
    </location>
</feature>
<feature type="compositionally biased region" description="Low complexity" evidence="2">
    <location>
        <begin position="13"/>
        <end position="60"/>
    </location>
</feature>
<feature type="compositionally biased region" description="Low complexity" evidence="2">
    <location>
        <begin position="719"/>
        <end position="729"/>
    </location>
</feature>
<feature type="compositionally biased region" description="Acidic residues" evidence="2">
    <location>
        <begin position="751"/>
        <end position="763"/>
    </location>
</feature>
<feature type="compositionally biased region" description="Low complexity" evidence="2">
    <location>
        <begin position="794"/>
        <end position="814"/>
    </location>
</feature>
<feature type="compositionally biased region" description="Low complexity" evidence="2">
    <location>
        <begin position="910"/>
        <end position="929"/>
    </location>
</feature>
<sequence length="937" mass="105880">MQQPISIQQPVVNNINNSPNNQANINNNTTNNTNNNNNNNNTTNNIANNNNSNNINNNNEINNSNINNNINNGINNDIDRGGEKKANKLIAKTTKKFNKDMTAYTSGKFFELWRNQVVRDKILGYVRIHNLHYDKRVFKCIDLNNCIDNGADLQQQHNCHRVHNHYHQDLGHNYFGKVSRGIVSLSDYKYYGYLRSVHLIGYEQHEEELIKTIKSLPVGVSTLELSGHLNKIIFKEGSLPTSITNLTISSPTKLGYKSIPSHLKTLKLNSTFNDPLLVQGRLEGQLGIVPLLPIDGAITSLDTGGKFNQPFEAGLLPSSLTELAFGNEYFRPIEVGSLPSGIKSLKLGQRFCLPIPIGSLPIGLTELQLGGTQQNPILTIGCLPPTLTKLTLDNHFNQPLVIGVIPSSLKTMIFGPRYNQPLPPSVFPDSLTHLEFHQNSSYIFPLKLGYNIPSNVSTLLLSFRSQERNVTLGTNSNIKKLRCGGDYLPSLSSDDSTIGAILNSFSSSSSRETFPRSVESLHLNIVNVLDKEINIPSNVTKLIITGNNLQHDGPDVFMVGKKGSKITHLKLRGYEKPICQEMFKNLVNLKSIQFIGAYNHQLGPNCFPPQSITNLEFDCLPSVIPIGSLPSTLKSLRVKSFCTPFLKNSLPSSLLILECAFVRSFIDSYEIVDEIFVEQQAQYAQQQLLQNEQALQAQKQLEIQQQVAQQRLQQLKQQKQQQQQQQDNEQQLDHSIENNDGSIQDDHEHELEEEQENEEEEEDTNNHQHPFLQEAINHNQQLQQKQQEKYLYSSNNSNNYNYNNNSNNNNNNNSNEEDDEEEDLIQPIISKEWLPPSIHTLIIRGEPTIQLPLPESLTNIHIESKNQSILHNIPLMEKISKLVRVFDYESDTNSIFKKSLAICNNINQNQNQNNNNYNNNNNNNNNNNNNKKKNVKK</sequence>
<evidence type="ECO:0000255" key="1"/>
<evidence type="ECO:0000256" key="2">
    <source>
        <dbReference type="SAM" id="MobiDB-lite"/>
    </source>
</evidence>
<reference key="1">
    <citation type="journal article" date="2002" name="Nature">
        <title>Sequence and analysis of chromosome 2 of Dictyostelium discoideum.</title>
        <authorList>
            <person name="Gloeckner G."/>
            <person name="Eichinger L."/>
            <person name="Szafranski K."/>
            <person name="Pachebat J.A."/>
            <person name="Bankier A.T."/>
            <person name="Dear P.H."/>
            <person name="Lehmann R."/>
            <person name="Baumgart C."/>
            <person name="Parra G."/>
            <person name="Abril J.F."/>
            <person name="Guigo R."/>
            <person name="Kumpf K."/>
            <person name="Tunggal B."/>
            <person name="Cox E.C."/>
            <person name="Quail M.A."/>
            <person name="Platzer M."/>
            <person name="Rosenthal A."/>
            <person name="Noegel A.A."/>
        </authorList>
    </citation>
    <scope>NUCLEOTIDE SEQUENCE [LARGE SCALE GENOMIC DNA]</scope>
    <source>
        <strain>AX4</strain>
    </source>
</reference>
<reference key="2">
    <citation type="journal article" date="2005" name="Nature">
        <title>The genome of the social amoeba Dictyostelium discoideum.</title>
        <authorList>
            <person name="Eichinger L."/>
            <person name="Pachebat J.A."/>
            <person name="Gloeckner G."/>
            <person name="Rajandream M.A."/>
            <person name="Sucgang R."/>
            <person name="Berriman M."/>
            <person name="Song J."/>
            <person name="Olsen R."/>
            <person name="Szafranski K."/>
            <person name="Xu Q."/>
            <person name="Tunggal B."/>
            <person name="Kummerfeld S."/>
            <person name="Madera M."/>
            <person name="Konfortov B.A."/>
            <person name="Rivero F."/>
            <person name="Bankier A.T."/>
            <person name="Lehmann R."/>
            <person name="Hamlin N."/>
            <person name="Davies R."/>
            <person name="Gaudet P."/>
            <person name="Fey P."/>
            <person name="Pilcher K."/>
            <person name="Chen G."/>
            <person name="Saunders D."/>
            <person name="Sodergren E.J."/>
            <person name="Davis P."/>
            <person name="Kerhornou A."/>
            <person name="Nie X."/>
            <person name="Hall N."/>
            <person name="Anjard C."/>
            <person name="Hemphill L."/>
            <person name="Bason N."/>
            <person name="Farbrother P."/>
            <person name="Desany B."/>
            <person name="Just E."/>
            <person name="Morio T."/>
            <person name="Rost R."/>
            <person name="Churcher C.M."/>
            <person name="Cooper J."/>
            <person name="Haydock S."/>
            <person name="van Driessche N."/>
            <person name="Cronin A."/>
            <person name="Goodhead I."/>
            <person name="Muzny D.M."/>
            <person name="Mourier T."/>
            <person name="Pain A."/>
            <person name="Lu M."/>
            <person name="Harper D."/>
            <person name="Lindsay R."/>
            <person name="Hauser H."/>
            <person name="James K.D."/>
            <person name="Quiles M."/>
            <person name="Madan Babu M."/>
            <person name="Saito T."/>
            <person name="Buchrieser C."/>
            <person name="Wardroper A."/>
            <person name="Felder M."/>
            <person name="Thangavelu M."/>
            <person name="Johnson D."/>
            <person name="Knights A."/>
            <person name="Loulseged H."/>
            <person name="Mungall K.L."/>
            <person name="Oliver K."/>
            <person name="Price C."/>
            <person name="Quail M.A."/>
            <person name="Urushihara H."/>
            <person name="Hernandez J."/>
            <person name="Rabbinowitsch E."/>
            <person name="Steffen D."/>
            <person name="Sanders M."/>
            <person name="Ma J."/>
            <person name="Kohara Y."/>
            <person name="Sharp S."/>
            <person name="Simmonds M.N."/>
            <person name="Spiegler S."/>
            <person name="Tivey A."/>
            <person name="Sugano S."/>
            <person name="White B."/>
            <person name="Walker D."/>
            <person name="Woodward J.R."/>
            <person name="Winckler T."/>
            <person name="Tanaka Y."/>
            <person name="Shaulsky G."/>
            <person name="Schleicher M."/>
            <person name="Weinstock G.M."/>
            <person name="Rosenthal A."/>
            <person name="Cox E.C."/>
            <person name="Chisholm R.L."/>
            <person name="Gibbs R.A."/>
            <person name="Loomis W.F."/>
            <person name="Platzer M."/>
            <person name="Kay R.R."/>
            <person name="Williams J.G."/>
            <person name="Dear P.H."/>
            <person name="Noegel A.A."/>
            <person name="Barrell B.G."/>
            <person name="Kuspa A."/>
        </authorList>
    </citation>
    <scope>NUCLEOTIDE SEQUENCE [LARGE SCALE GENOMIC DNA]</scope>
    <source>
        <strain>AX4</strain>
    </source>
</reference>
<organism>
    <name type="scientific">Dictyostelium discoideum</name>
    <name type="common">Social amoeba</name>
    <dbReference type="NCBI Taxonomy" id="44689"/>
    <lineage>
        <taxon>Eukaryota</taxon>
        <taxon>Amoebozoa</taxon>
        <taxon>Evosea</taxon>
        <taxon>Eumycetozoa</taxon>
        <taxon>Dictyostelia</taxon>
        <taxon>Dictyosteliales</taxon>
        <taxon>Dictyosteliaceae</taxon>
        <taxon>Dictyostelium</taxon>
    </lineage>
</organism>